<comment type="function">
    <text evidence="1">The UvrABC repair system catalyzes the recognition and processing of DNA lesions. A damage recognition complex composed of 2 UvrA and 2 UvrB subunits scans DNA for abnormalities. Upon binding of the UvrA(2)B(2) complex to a putative damaged site, the DNA wraps around one UvrB monomer. DNA wrap is dependent on ATP binding by UvrB and probably causes local melting of the DNA helix, facilitating insertion of UvrB beta-hairpin between the DNA strands. Then UvrB probes one DNA strand for the presence of a lesion. If a lesion is found the UvrA subunits dissociate and the UvrB-DNA preincision complex is formed. This complex is subsequently bound by UvrC and the second UvrB is released. If no lesion is found, the DNA wraps around the other UvrB subunit that will check the other stand for damage.</text>
</comment>
<comment type="subunit">
    <text evidence="1">Forms a heterotetramer with UvrA during the search for lesions. Interacts with UvrC in an incision complex.</text>
</comment>
<comment type="subcellular location">
    <subcellularLocation>
        <location evidence="1">Cytoplasm</location>
    </subcellularLocation>
</comment>
<comment type="domain">
    <text evidence="1">The beta-hairpin motif is involved in DNA binding.</text>
</comment>
<comment type="similarity">
    <text evidence="1">Belongs to the UvrB family.</text>
</comment>
<name>UVRB_STRP3</name>
<evidence type="ECO:0000255" key="1">
    <source>
        <dbReference type="HAMAP-Rule" id="MF_00204"/>
    </source>
</evidence>
<evidence type="ECO:0000256" key="2">
    <source>
        <dbReference type="SAM" id="MobiDB-lite"/>
    </source>
</evidence>
<accession>P0DH38</accession>
<accession>Q8K743</accession>
<dbReference type="EMBL" id="AE014074">
    <property type="protein sequence ID" value="AAM79603.1"/>
    <property type="molecule type" value="Genomic_DNA"/>
</dbReference>
<dbReference type="RefSeq" id="WP_002989569.1">
    <property type="nucleotide sequence ID" value="NC_004070.1"/>
</dbReference>
<dbReference type="SMR" id="P0DH38"/>
<dbReference type="KEGG" id="spg:SpyM3_0996"/>
<dbReference type="HOGENOM" id="CLU_009621_2_1_9"/>
<dbReference type="Proteomes" id="UP000000564">
    <property type="component" value="Chromosome"/>
</dbReference>
<dbReference type="GO" id="GO:0005737">
    <property type="term" value="C:cytoplasm"/>
    <property type="evidence" value="ECO:0007669"/>
    <property type="project" value="UniProtKB-SubCell"/>
</dbReference>
<dbReference type="GO" id="GO:0009380">
    <property type="term" value="C:excinuclease repair complex"/>
    <property type="evidence" value="ECO:0007669"/>
    <property type="project" value="InterPro"/>
</dbReference>
<dbReference type="GO" id="GO:0005524">
    <property type="term" value="F:ATP binding"/>
    <property type="evidence" value="ECO:0007669"/>
    <property type="project" value="UniProtKB-UniRule"/>
</dbReference>
<dbReference type="GO" id="GO:0016887">
    <property type="term" value="F:ATP hydrolysis activity"/>
    <property type="evidence" value="ECO:0007669"/>
    <property type="project" value="InterPro"/>
</dbReference>
<dbReference type="GO" id="GO:0003677">
    <property type="term" value="F:DNA binding"/>
    <property type="evidence" value="ECO:0007669"/>
    <property type="project" value="UniProtKB-UniRule"/>
</dbReference>
<dbReference type="GO" id="GO:0009381">
    <property type="term" value="F:excinuclease ABC activity"/>
    <property type="evidence" value="ECO:0007669"/>
    <property type="project" value="UniProtKB-UniRule"/>
</dbReference>
<dbReference type="GO" id="GO:0006289">
    <property type="term" value="P:nucleotide-excision repair"/>
    <property type="evidence" value="ECO:0007669"/>
    <property type="project" value="UniProtKB-UniRule"/>
</dbReference>
<dbReference type="GO" id="GO:0009432">
    <property type="term" value="P:SOS response"/>
    <property type="evidence" value="ECO:0007669"/>
    <property type="project" value="UniProtKB-UniRule"/>
</dbReference>
<dbReference type="CDD" id="cd17916">
    <property type="entry name" value="DEXHc_UvrB"/>
    <property type="match status" value="1"/>
</dbReference>
<dbReference type="CDD" id="cd18790">
    <property type="entry name" value="SF2_C_UvrB"/>
    <property type="match status" value="1"/>
</dbReference>
<dbReference type="Gene3D" id="3.40.50.300">
    <property type="entry name" value="P-loop containing nucleotide triphosphate hydrolases"/>
    <property type="match status" value="3"/>
</dbReference>
<dbReference type="Gene3D" id="4.10.860.10">
    <property type="entry name" value="UVR domain"/>
    <property type="match status" value="1"/>
</dbReference>
<dbReference type="HAMAP" id="MF_00204">
    <property type="entry name" value="UvrB"/>
    <property type="match status" value="1"/>
</dbReference>
<dbReference type="InterPro" id="IPR006935">
    <property type="entry name" value="Helicase/UvrB_N"/>
</dbReference>
<dbReference type="InterPro" id="IPR014001">
    <property type="entry name" value="Helicase_ATP-bd"/>
</dbReference>
<dbReference type="InterPro" id="IPR001650">
    <property type="entry name" value="Helicase_C-like"/>
</dbReference>
<dbReference type="InterPro" id="IPR027417">
    <property type="entry name" value="P-loop_NTPase"/>
</dbReference>
<dbReference type="InterPro" id="IPR001943">
    <property type="entry name" value="UVR_dom"/>
</dbReference>
<dbReference type="InterPro" id="IPR036876">
    <property type="entry name" value="UVR_dom_sf"/>
</dbReference>
<dbReference type="InterPro" id="IPR004807">
    <property type="entry name" value="UvrB"/>
</dbReference>
<dbReference type="InterPro" id="IPR041471">
    <property type="entry name" value="UvrB_inter"/>
</dbReference>
<dbReference type="InterPro" id="IPR024759">
    <property type="entry name" value="UvrB_YAD/RRR_dom"/>
</dbReference>
<dbReference type="NCBIfam" id="NF003673">
    <property type="entry name" value="PRK05298.1"/>
    <property type="match status" value="1"/>
</dbReference>
<dbReference type="NCBIfam" id="TIGR00631">
    <property type="entry name" value="uvrb"/>
    <property type="match status" value="1"/>
</dbReference>
<dbReference type="PANTHER" id="PTHR24029">
    <property type="entry name" value="UVRABC SYSTEM PROTEIN B"/>
    <property type="match status" value="1"/>
</dbReference>
<dbReference type="PANTHER" id="PTHR24029:SF0">
    <property type="entry name" value="UVRABC SYSTEM PROTEIN B"/>
    <property type="match status" value="1"/>
</dbReference>
<dbReference type="Pfam" id="PF00271">
    <property type="entry name" value="Helicase_C"/>
    <property type="match status" value="1"/>
</dbReference>
<dbReference type="Pfam" id="PF04851">
    <property type="entry name" value="ResIII"/>
    <property type="match status" value="1"/>
</dbReference>
<dbReference type="Pfam" id="PF02151">
    <property type="entry name" value="UVR"/>
    <property type="match status" value="1"/>
</dbReference>
<dbReference type="Pfam" id="PF12344">
    <property type="entry name" value="UvrB"/>
    <property type="match status" value="1"/>
</dbReference>
<dbReference type="Pfam" id="PF17757">
    <property type="entry name" value="UvrB_inter"/>
    <property type="match status" value="1"/>
</dbReference>
<dbReference type="SMART" id="SM00487">
    <property type="entry name" value="DEXDc"/>
    <property type="match status" value="1"/>
</dbReference>
<dbReference type="SMART" id="SM00490">
    <property type="entry name" value="HELICc"/>
    <property type="match status" value="1"/>
</dbReference>
<dbReference type="SUPFAM" id="SSF46600">
    <property type="entry name" value="C-terminal UvrC-binding domain of UvrB"/>
    <property type="match status" value="1"/>
</dbReference>
<dbReference type="SUPFAM" id="SSF52540">
    <property type="entry name" value="P-loop containing nucleoside triphosphate hydrolases"/>
    <property type="match status" value="2"/>
</dbReference>
<dbReference type="PROSITE" id="PS51192">
    <property type="entry name" value="HELICASE_ATP_BIND_1"/>
    <property type="match status" value="1"/>
</dbReference>
<dbReference type="PROSITE" id="PS51194">
    <property type="entry name" value="HELICASE_CTER"/>
    <property type="match status" value="1"/>
</dbReference>
<dbReference type="PROSITE" id="PS50151">
    <property type="entry name" value="UVR"/>
    <property type="match status" value="1"/>
</dbReference>
<keyword id="KW-0067">ATP-binding</keyword>
<keyword id="KW-0963">Cytoplasm</keyword>
<keyword id="KW-0227">DNA damage</keyword>
<keyword id="KW-0228">DNA excision</keyword>
<keyword id="KW-0234">DNA repair</keyword>
<keyword id="KW-0267">Excision nuclease</keyword>
<keyword id="KW-0547">Nucleotide-binding</keyword>
<keyword id="KW-0742">SOS response</keyword>
<feature type="chain" id="PRO_0000138435" description="UvrABC system protein B">
    <location>
        <begin position="1"/>
        <end position="663"/>
    </location>
</feature>
<feature type="domain" description="Helicase ATP-binding" evidence="1">
    <location>
        <begin position="31"/>
        <end position="418"/>
    </location>
</feature>
<feature type="domain" description="Helicase C-terminal" evidence="1">
    <location>
        <begin position="435"/>
        <end position="601"/>
    </location>
</feature>
<feature type="domain" description="UVR" evidence="1">
    <location>
        <begin position="627"/>
        <end position="662"/>
    </location>
</feature>
<feature type="region of interest" description="Disordered" evidence="2">
    <location>
        <begin position="1"/>
        <end position="23"/>
    </location>
</feature>
<feature type="short sequence motif" description="Beta-hairpin">
    <location>
        <begin position="97"/>
        <end position="120"/>
    </location>
</feature>
<feature type="compositionally biased region" description="Basic and acidic residues" evidence="2">
    <location>
        <begin position="1"/>
        <end position="10"/>
    </location>
</feature>
<feature type="binding site" evidence="1">
    <location>
        <begin position="44"/>
        <end position="51"/>
    </location>
    <ligand>
        <name>ATP</name>
        <dbReference type="ChEBI" id="CHEBI:30616"/>
    </ligand>
</feature>
<proteinExistence type="inferred from homology"/>
<organism>
    <name type="scientific">Streptococcus pyogenes serotype M3 (strain ATCC BAA-595 / MGAS315)</name>
    <dbReference type="NCBI Taxonomy" id="198466"/>
    <lineage>
        <taxon>Bacteria</taxon>
        <taxon>Bacillati</taxon>
        <taxon>Bacillota</taxon>
        <taxon>Bacilli</taxon>
        <taxon>Lactobacillales</taxon>
        <taxon>Streptococcaceae</taxon>
        <taxon>Streptococcus</taxon>
    </lineage>
</organism>
<gene>
    <name evidence="1" type="primary">uvrB</name>
    <name type="ordered locus">SpyM3_0996</name>
</gene>
<reference key="1">
    <citation type="journal article" date="2002" name="Proc. Natl. Acad. Sci. U.S.A.">
        <title>Genome sequence of a serotype M3 strain of group A Streptococcus: phage-encoded toxins, the high-virulence phenotype, and clone emergence.</title>
        <authorList>
            <person name="Beres S.B."/>
            <person name="Sylva G.L."/>
            <person name="Barbian K.D."/>
            <person name="Lei B."/>
            <person name="Hoff J.S."/>
            <person name="Mammarella N.D."/>
            <person name="Liu M.-Y."/>
            <person name="Smoot J.C."/>
            <person name="Porcella S.F."/>
            <person name="Parkins L.D."/>
            <person name="Campbell D.S."/>
            <person name="Smith T.M."/>
            <person name="McCormick J.K."/>
            <person name="Leung D.Y.M."/>
            <person name="Schlievert P.M."/>
            <person name="Musser J.M."/>
        </authorList>
    </citation>
    <scope>NUCLEOTIDE SEQUENCE [LARGE SCALE GENOMIC DNA]</scope>
    <source>
        <strain>ATCC BAA-595 / MGAS315</strain>
    </source>
</reference>
<sequence>MIDKRDDKPFKLKSKYKPSGDQPQAIESLVDNIEGGEKAQILLGATGTGKTYTMSQVISKVNKPTLVIAHNKTLAGQLYGEFKEFFPDNAVEYFVSYYDYYQPEAYVPSSDTYIEKDSSVNDEIDKLRHSATSSLLERNDVIVVASVSCIYGLGSPKEYADSAVSLRPGQEISRDTLLNQLVDIQFERNDIDFQRGCFRVRGDVVEVFPASRDEHAFRVEFFGDEIDRICEIESLTGKTIGEVDHLVLFPATHFVTNDEHMEQSIAKIQAELAEQLQLFESEGKLLEAQRLRQRTEYDIEMLREMGYTSGVENYSRHMDGRSPGEPPYTLLDFFPEDFLIMIDESHMTMGQIKGMYNGDQARKQMLVDYGFRLPSALDNRPLRREEFESHVHQIVYVSATPGEYEMSQTNTIIEQIIRPTGLLDPEIDVRPSMGQMDDLLGEINQRVARDERTFITTLTKKMAEDLTDYLKEMGVKVKYMHSDIKTLERTEIIRDLRLGVFDVLIGINLLREGIDVPEVSLVAILDADKEGFLRNERGLIQTIGRAARNVDGHVIMYADKMTDSMQRAIDETARRREIQIAYNKAHGIVPQTIKKDIRGLISISKTSHNDISKEEMDYESMSRGERKEAINALQKQMQEAAELLDFELAAQMRDLILELKLMD</sequence>
<protein>
    <recommendedName>
        <fullName evidence="1">UvrABC system protein B</fullName>
        <shortName evidence="1">Protein UvrB</shortName>
    </recommendedName>
    <alternativeName>
        <fullName evidence="1">Excinuclease ABC subunit B</fullName>
    </alternativeName>
</protein>